<accession>Q8N4E7</accession>
<dbReference type="EC" id="1.16.3.1" evidence="5"/>
<dbReference type="EMBL" id="BC034419">
    <property type="protein sequence ID" value="AAH34419.1"/>
    <property type="molecule type" value="mRNA"/>
</dbReference>
<dbReference type="CCDS" id="CCDS4128.1"/>
<dbReference type="RefSeq" id="NP_803431.1">
    <property type="nucleotide sequence ID" value="NM_177478.2"/>
</dbReference>
<dbReference type="PDB" id="1R03">
    <property type="method" value="X-ray"/>
    <property type="resolution" value="1.70 A"/>
    <property type="chains" value="A=61-242"/>
</dbReference>
<dbReference type="PDB" id="5Z8J">
    <property type="method" value="X-ray"/>
    <property type="resolution" value="2.30 A"/>
    <property type="chains" value="A=61-242"/>
</dbReference>
<dbReference type="PDB" id="5Z8S">
    <property type="method" value="X-ray"/>
    <property type="resolution" value="1.97 A"/>
    <property type="chains" value="A=61-242"/>
</dbReference>
<dbReference type="PDB" id="5Z8U">
    <property type="method" value="X-ray"/>
    <property type="resolution" value="1.90 A"/>
    <property type="chains" value="A/B=61-242"/>
</dbReference>
<dbReference type="PDB" id="5Z91">
    <property type="method" value="X-ray"/>
    <property type="resolution" value="3.00 A"/>
    <property type="chains" value="A=61-242"/>
</dbReference>
<dbReference type="PDB" id="7O63">
    <property type="method" value="X-ray"/>
    <property type="resolution" value="1.16 A"/>
    <property type="chains" value="A=61-242"/>
</dbReference>
<dbReference type="PDB" id="7O64">
    <property type="method" value="X-ray"/>
    <property type="resolution" value="1.96 A"/>
    <property type="chains" value="A=61-242"/>
</dbReference>
<dbReference type="PDB" id="7O65">
    <property type="method" value="X-ray"/>
    <property type="resolution" value="1.70 A"/>
    <property type="chains" value="A=61-242"/>
</dbReference>
<dbReference type="PDB" id="7O66">
    <property type="method" value="X-ray"/>
    <property type="resolution" value="1.60 A"/>
    <property type="chains" value="A=61-242"/>
</dbReference>
<dbReference type="PDB" id="7O67">
    <property type="method" value="X-ray"/>
    <property type="resolution" value="1.86 A"/>
    <property type="chains" value="A=61-242"/>
</dbReference>
<dbReference type="PDB" id="7O68">
    <property type="method" value="X-ray"/>
    <property type="resolution" value="1.68 A"/>
    <property type="chains" value="A=61-242"/>
</dbReference>
<dbReference type="PDB" id="7O69">
    <property type="method" value="X-ray"/>
    <property type="resolution" value="1.35 A"/>
    <property type="chains" value="A=61-242"/>
</dbReference>
<dbReference type="PDB" id="7O6A">
    <property type="method" value="X-ray"/>
    <property type="resolution" value="1.40 A"/>
    <property type="chains" value="A=61-242"/>
</dbReference>
<dbReference type="PDB" id="7O6C">
    <property type="method" value="X-ray"/>
    <property type="resolution" value="1.20 A"/>
    <property type="chains" value="A=61-242"/>
</dbReference>
<dbReference type="PDB" id="7O6D">
    <property type="method" value="X-ray"/>
    <property type="resolution" value="1.47 A"/>
    <property type="chains" value="A=61-242"/>
</dbReference>
<dbReference type="PDB" id="7OWY">
    <property type="method" value="X-ray"/>
    <property type="resolution" value="1.55 A"/>
    <property type="chains" value="A=61-242"/>
</dbReference>
<dbReference type="PDBsum" id="1R03"/>
<dbReference type="PDBsum" id="5Z8J"/>
<dbReference type="PDBsum" id="5Z8S"/>
<dbReference type="PDBsum" id="5Z8U"/>
<dbReference type="PDBsum" id="5Z91"/>
<dbReference type="PDBsum" id="7O63"/>
<dbReference type="PDBsum" id="7O64"/>
<dbReference type="PDBsum" id="7O65"/>
<dbReference type="PDBsum" id="7O66"/>
<dbReference type="PDBsum" id="7O67"/>
<dbReference type="PDBsum" id="7O68"/>
<dbReference type="PDBsum" id="7O69"/>
<dbReference type="PDBsum" id="7O6A"/>
<dbReference type="PDBsum" id="7O6C"/>
<dbReference type="PDBsum" id="7O6D"/>
<dbReference type="PDBsum" id="7OWY"/>
<dbReference type="SMR" id="Q8N4E7"/>
<dbReference type="BioGRID" id="125101">
    <property type="interactions" value="1"/>
</dbReference>
<dbReference type="FunCoup" id="Q8N4E7">
    <property type="interactions" value="22"/>
</dbReference>
<dbReference type="STRING" id="9606.ENSP00000313691"/>
<dbReference type="BioMuta" id="FTMT"/>
<dbReference type="DMDM" id="62900307"/>
<dbReference type="jPOST" id="Q8N4E7"/>
<dbReference type="MassIVE" id="Q8N4E7"/>
<dbReference type="PaxDb" id="9606-ENSP00000313691"/>
<dbReference type="PeptideAtlas" id="Q8N4E7"/>
<dbReference type="ProteomicsDB" id="71925"/>
<dbReference type="Antibodypedia" id="52782">
    <property type="antibodies" value="75 antibodies from 20 providers"/>
</dbReference>
<dbReference type="DNASU" id="94033"/>
<dbReference type="Ensembl" id="ENST00000321339.3">
    <property type="protein sequence ID" value="ENSP00000313691.1"/>
    <property type="gene ID" value="ENSG00000181867.3"/>
</dbReference>
<dbReference type="GeneID" id="94033"/>
<dbReference type="KEGG" id="hsa:94033"/>
<dbReference type="MANE-Select" id="ENST00000321339.3">
    <property type="protein sequence ID" value="ENSP00000313691.1"/>
    <property type="RefSeq nucleotide sequence ID" value="NM_177478.2"/>
    <property type="RefSeq protein sequence ID" value="NP_803431.1"/>
</dbReference>
<dbReference type="UCSC" id="uc003kss.4">
    <property type="organism name" value="human"/>
</dbReference>
<dbReference type="AGR" id="HGNC:17345"/>
<dbReference type="CTD" id="94033"/>
<dbReference type="DisGeNET" id="94033"/>
<dbReference type="GeneCards" id="FTMT"/>
<dbReference type="HGNC" id="HGNC:17345">
    <property type="gene designation" value="FTMT"/>
</dbReference>
<dbReference type="HPA" id="ENSG00000181867">
    <property type="expression patterns" value="Tissue enriched (testis)"/>
</dbReference>
<dbReference type="MIM" id="608847">
    <property type="type" value="gene"/>
</dbReference>
<dbReference type="neXtProt" id="NX_Q8N4E7"/>
<dbReference type="OpenTargets" id="ENSG00000181867"/>
<dbReference type="PharmGKB" id="PA134941146"/>
<dbReference type="VEuPathDB" id="HostDB:ENSG00000181867"/>
<dbReference type="eggNOG" id="KOG2332">
    <property type="taxonomic scope" value="Eukaryota"/>
</dbReference>
<dbReference type="GeneTree" id="ENSGT00940000163120"/>
<dbReference type="HOGENOM" id="CLU_065681_4_0_1"/>
<dbReference type="InParanoid" id="Q8N4E7"/>
<dbReference type="OMA" id="REHACKF"/>
<dbReference type="OrthoDB" id="186462at2759"/>
<dbReference type="PAN-GO" id="Q8N4E7">
    <property type="GO annotations" value="5 GO annotations based on evolutionary models"/>
</dbReference>
<dbReference type="PhylomeDB" id="Q8N4E7"/>
<dbReference type="TreeFam" id="TF313885"/>
<dbReference type="PathwayCommons" id="Q8N4E7"/>
<dbReference type="Reactome" id="R-HSA-917937">
    <property type="pathway name" value="Iron uptake and transport"/>
</dbReference>
<dbReference type="SignaLink" id="Q8N4E7"/>
<dbReference type="BioGRID-ORCS" id="94033">
    <property type="hits" value="23 hits in 1152 CRISPR screens"/>
</dbReference>
<dbReference type="EvolutionaryTrace" id="Q8N4E7"/>
<dbReference type="GeneWiki" id="Mitochondrial_ferritin"/>
<dbReference type="GenomeRNAi" id="94033"/>
<dbReference type="Pharos" id="Q8N4E7">
    <property type="development level" value="Tbio"/>
</dbReference>
<dbReference type="PRO" id="PR:Q8N4E7"/>
<dbReference type="Proteomes" id="UP000005640">
    <property type="component" value="Chromosome 5"/>
</dbReference>
<dbReference type="RNAct" id="Q8N4E7">
    <property type="molecule type" value="protein"/>
</dbReference>
<dbReference type="Bgee" id="ENSG00000181867">
    <property type="expression patterns" value="Expressed in primordial germ cell in gonad and 16 other cell types or tissues"/>
</dbReference>
<dbReference type="GO" id="GO:0005737">
    <property type="term" value="C:cytoplasm"/>
    <property type="evidence" value="ECO:0000318"/>
    <property type="project" value="GO_Central"/>
</dbReference>
<dbReference type="GO" id="GO:0005759">
    <property type="term" value="C:mitochondrial matrix"/>
    <property type="evidence" value="ECO:0000304"/>
    <property type="project" value="Reactome"/>
</dbReference>
<dbReference type="GO" id="GO:0005739">
    <property type="term" value="C:mitochondrion"/>
    <property type="evidence" value="ECO:0000314"/>
    <property type="project" value="UniProtKB"/>
</dbReference>
<dbReference type="GO" id="GO:0005634">
    <property type="term" value="C:nucleus"/>
    <property type="evidence" value="ECO:0007005"/>
    <property type="project" value="UniProtKB"/>
</dbReference>
<dbReference type="GO" id="GO:0008199">
    <property type="term" value="F:ferric iron binding"/>
    <property type="evidence" value="ECO:0000318"/>
    <property type="project" value="GO_Central"/>
</dbReference>
<dbReference type="GO" id="GO:0008198">
    <property type="term" value="F:ferrous iron binding"/>
    <property type="evidence" value="ECO:0000318"/>
    <property type="project" value="GO_Central"/>
</dbReference>
<dbReference type="GO" id="GO:0004322">
    <property type="term" value="F:ferroxidase activity"/>
    <property type="evidence" value="ECO:0000314"/>
    <property type="project" value="UniProtKB"/>
</dbReference>
<dbReference type="GO" id="GO:0005506">
    <property type="term" value="F:iron ion binding"/>
    <property type="evidence" value="ECO:0000314"/>
    <property type="project" value="UniProtKB"/>
</dbReference>
<dbReference type="GO" id="GO:0006879">
    <property type="term" value="P:intracellular iron ion homeostasis"/>
    <property type="evidence" value="ECO:0000314"/>
    <property type="project" value="UniProtKB"/>
</dbReference>
<dbReference type="GO" id="GO:0006826">
    <property type="term" value="P:iron ion transport"/>
    <property type="evidence" value="ECO:0007669"/>
    <property type="project" value="InterPro"/>
</dbReference>
<dbReference type="GO" id="GO:0051604">
    <property type="term" value="P:protein maturation"/>
    <property type="evidence" value="ECO:0000314"/>
    <property type="project" value="BHF-UCL"/>
</dbReference>
<dbReference type="CDD" id="cd01056">
    <property type="entry name" value="Euk_Ferritin"/>
    <property type="match status" value="1"/>
</dbReference>
<dbReference type="FunFam" id="1.20.1260.10:FF:000016">
    <property type="entry name" value="Ferritin heavy chain"/>
    <property type="match status" value="1"/>
</dbReference>
<dbReference type="Gene3D" id="1.20.1260.10">
    <property type="match status" value="1"/>
</dbReference>
<dbReference type="InterPro" id="IPR001519">
    <property type="entry name" value="Ferritin"/>
</dbReference>
<dbReference type="InterPro" id="IPR012347">
    <property type="entry name" value="Ferritin-like"/>
</dbReference>
<dbReference type="InterPro" id="IPR009040">
    <property type="entry name" value="Ferritin-like_diiron"/>
</dbReference>
<dbReference type="InterPro" id="IPR009078">
    <property type="entry name" value="Ferritin-like_SF"/>
</dbReference>
<dbReference type="InterPro" id="IPR014034">
    <property type="entry name" value="Ferritin_CS"/>
</dbReference>
<dbReference type="InterPro" id="IPR008331">
    <property type="entry name" value="Ferritin_DPS_dom"/>
</dbReference>
<dbReference type="PANTHER" id="PTHR11431">
    <property type="entry name" value="FERRITIN"/>
    <property type="match status" value="1"/>
</dbReference>
<dbReference type="PANTHER" id="PTHR11431:SF30">
    <property type="entry name" value="FERRITIN, MITOCHONDRIAL"/>
    <property type="match status" value="1"/>
</dbReference>
<dbReference type="Pfam" id="PF00210">
    <property type="entry name" value="Ferritin"/>
    <property type="match status" value="1"/>
</dbReference>
<dbReference type="SUPFAM" id="SSF47240">
    <property type="entry name" value="Ferritin-like"/>
    <property type="match status" value="1"/>
</dbReference>
<dbReference type="PROSITE" id="PS00204">
    <property type="entry name" value="FERRITIN_2"/>
    <property type="match status" value="1"/>
</dbReference>
<dbReference type="PROSITE" id="PS50905">
    <property type="entry name" value="FERRITIN_LIKE"/>
    <property type="match status" value="1"/>
</dbReference>
<reference key="1">
    <citation type="journal article" date="2004" name="Genome Res.">
        <title>The status, quality, and expansion of the NIH full-length cDNA project: the Mammalian Gene Collection (MGC).</title>
        <authorList>
            <consortium name="The MGC Project Team"/>
        </authorList>
    </citation>
    <scope>NUCLEOTIDE SEQUENCE [LARGE SCALE MRNA]</scope>
    <source>
        <tissue>Brain</tissue>
    </source>
</reference>
<reference key="2">
    <citation type="journal article" date="2001" name="J. Biol. Chem.">
        <title>A human mitochondrial ferritin encoded by an intronless gene.</title>
        <authorList>
            <person name="Levi S."/>
            <person name="Corsi B."/>
            <person name="Bosisio M."/>
            <person name="Invernizzi R."/>
            <person name="Volz A."/>
            <person name="Sanford D."/>
            <person name="Arosio P."/>
            <person name="Drysdale J."/>
        </authorList>
    </citation>
    <scope>FUNCTION</scope>
    <scope>CATALYTIC ACTIVITY</scope>
    <scope>SUBCELLULAR LOCATION</scope>
    <scope>TISSUE SPECIFICITY</scope>
</reference>
<reference key="3">
    <citation type="journal article" date="2004" name="J. Mol. Biol.">
        <title>Crystal structure and biochemical properties of the human mitochondrial ferritin and its mutant Ser144Ala.</title>
        <authorList>
            <person name="Langlois d'Estaintot B."/>
            <person name="Santambrogio P."/>
            <person name="Granier T."/>
            <person name="Gallois B."/>
            <person name="Chevalier J.M."/>
            <person name="Precigoux G."/>
            <person name="Levi S."/>
            <person name="Arosio P."/>
        </authorList>
    </citation>
    <scope>X-RAY CRYSTALLOGRAPHY (1.38 ANGSTROMS) OF 61-242</scope>
    <scope>FUNCTION</scope>
    <scope>CATALYTIC ACTIVITY</scope>
    <scope>MUTAGENESIS OF SER-204</scope>
    <scope>SUBUNIT</scope>
</reference>
<protein>
    <recommendedName>
        <fullName evidence="6">Ferritin, mitochondrial</fullName>
        <ecNumber evidence="5">1.16.3.1</ecNumber>
    </recommendedName>
</protein>
<evidence type="ECO:0000255" key="1"/>
<evidence type="ECO:0000255" key="2">
    <source>
        <dbReference type="PROSITE-ProRule" id="PRU00085"/>
    </source>
</evidence>
<evidence type="ECO:0000256" key="3">
    <source>
        <dbReference type="SAM" id="MobiDB-lite"/>
    </source>
</evidence>
<evidence type="ECO:0000269" key="4">
    <source>
    </source>
</evidence>
<evidence type="ECO:0000269" key="5">
    <source>
    </source>
</evidence>
<evidence type="ECO:0000305" key="6"/>
<evidence type="ECO:0000305" key="7">
    <source>
    </source>
</evidence>
<evidence type="ECO:0000305" key="8">
    <source>
    </source>
</evidence>
<evidence type="ECO:0000312" key="9">
    <source>
        <dbReference type="HGNC" id="HGNC:17345"/>
    </source>
</evidence>
<evidence type="ECO:0007744" key="10">
    <source>
        <dbReference type="PDB" id="1R03"/>
    </source>
</evidence>
<evidence type="ECO:0007829" key="11">
    <source>
        <dbReference type="PDB" id="7O63"/>
    </source>
</evidence>
<gene>
    <name evidence="9" type="primary">FTMT</name>
</gene>
<feature type="transit peptide" description="Mitochondrion" evidence="1">
    <location>
        <begin position="1"/>
        <end position="49"/>
    </location>
</feature>
<feature type="chain" id="PRO_0000008850" description="Ferritin, mitochondrial">
    <location>
        <begin position="50"/>
        <end position="242"/>
    </location>
</feature>
<feature type="domain" description="Ferritin-like diiron" evidence="2">
    <location>
        <begin position="70"/>
        <end position="219"/>
    </location>
</feature>
<feature type="region of interest" description="Disordered" evidence="3">
    <location>
        <begin position="47"/>
        <end position="71"/>
    </location>
</feature>
<feature type="compositionally biased region" description="Low complexity" evidence="3">
    <location>
        <begin position="47"/>
        <end position="58"/>
    </location>
</feature>
<feature type="binding site" evidence="5 10">
    <location>
        <position position="87"/>
    </location>
    <ligand>
        <name>Fe cation</name>
        <dbReference type="ChEBI" id="CHEBI:24875"/>
        <label>1</label>
    </ligand>
</feature>
<feature type="binding site" evidence="5 10">
    <location>
        <position position="122"/>
    </location>
    <ligand>
        <name>Fe cation</name>
        <dbReference type="ChEBI" id="CHEBI:24875"/>
        <label>1</label>
    </ligand>
</feature>
<feature type="binding site" evidence="5 10">
    <location>
        <position position="122"/>
    </location>
    <ligand>
        <name>Fe cation</name>
        <dbReference type="ChEBI" id="CHEBI:24875"/>
        <label>2</label>
    </ligand>
</feature>
<feature type="binding site" evidence="5 10">
    <location>
        <position position="125"/>
    </location>
    <ligand>
        <name>Fe cation</name>
        <dbReference type="ChEBI" id="CHEBI:24875"/>
        <label>1</label>
    </ligand>
</feature>
<feature type="binding site" evidence="5 10">
    <location>
        <position position="167"/>
    </location>
    <ligand>
        <name>Fe cation</name>
        <dbReference type="ChEBI" id="CHEBI:24875"/>
        <label>2</label>
    </ligand>
</feature>
<feature type="binding site" evidence="5 10">
    <location>
        <position position="201"/>
    </location>
    <ligand>
        <name>Fe cation</name>
        <dbReference type="ChEBI" id="CHEBI:24875"/>
        <label>2</label>
    </ligand>
</feature>
<feature type="mutagenesis site" description="Increases ferroxidase activity and iron binding." evidence="5">
    <original>S</original>
    <variation>A</variation>
    <location>
        <position position="204"/>
    </location>
</feature>
<feature type="helix" evidence="11">
    <location>
        <begin position="74"/>
        <end position="100"/>
    </location>
</feature>
<feature type="turn" evidence="11">
    <location>
        <begin position="104"/>
        <end position="106"/>
    </location>
</feature>
<feature type="helix" evidence="11">
    <location>
        <begin position="109"/>
        <end position="136"/>
    </location>
</feature>
<feature type="helix" evidence="11">
    <location>
        <begin position="156"/>
        <end position="183"/>
    </location>
</feature>
<feature type="helix" evidence="11">
    <location>
        <begin position="187"/>
        <end position="196"/>
    </location>
</feature>
<feature type="helix" evidence="11">
    <location>
        <begin position="198"/>
        <end position="218"/>
    </location>
</feature>
<feature type="turn" evidence="11">
    <location>
        <begin position="219"/>
        <end position="222"/>
    </location>
</feature>
<feature type="helix" evidence="11">
    <location>
        <begin position="226"/>
        <end position="232"/>
    </location>
</feature>
<feature type="turn" evidence="11">
    <location>
        <begin position="233"/>
        <end position="235"/>
    </location>
</feature>
<sequence length="242" mass="27538">MLSCFRLLSRHISPSLASLRPVRCCFALPLRWAPGRPLDPRQIAPRRPLAAAASSRDPTGPAAGPSRVRQNFHPDSEAAINRQINLELYASYVYLSMAYYFSRDDVALNNFSRYFLHQSREETEHAEKLMRLQNQRGGRIRLQDIKKPEQDDWESGLHAMECALLLEKNVNQSLLELHALASDKGDPHLCDFLETYYLNEQVKSIKELGDHVHNLVKMGAPDAGLAEYLFDTHTLGNENKQN</sequence>
<name>FTMT_HUMAN</name>
<organism>
    <name type="scientific">Homo sapiens</name>
    <name type="common">Human</name>
    <dbReference type="NCBI Taxonomy" id="9606"/>
    <lineage>
        <taxon>Eukaryota</taxon>
        <taxon>Metazoa</taxon>
        <taxon>Chordata</taxon>
        <taxon>Craniata</taxon>
        <taxon>Vertebrata</taxon>
        <taxon>Euteleostomi</taxon>
        <taxon>Mammalia</taxon>
        <taxon>Eutheria</taxon>
        <taxon>Euarchontoglires</taxon>
        <taxon>Primates</taxon>
        <taxon>Haplorrhini</taxon>
        <taxon>Catarrhini</taxon>
        <taxon>Hominidae</taxon>
        <taxon>Homo</taxon>
    </lineage>
</organism>
<comment type="function">
    <text evidence="4 5">Catalyzes the oxidation of ferrous iron(II) to ferric iron(III) and stores iron in a soluble, non-toxic, readily available form (PubMed:11323407, PubMed:15201052). Important for iron homeostasis (PubMed:11323407, PubMed:15201052). Iron is taken up in the ferrous form and deposited as ferric hydroxides after oxidation (PubMed:11323407, PubMed:15201052).</text>
</comment>
<comment type="catalytic activity">
    <reaction evidence="4 5">
        <text>4 Fe(2+) + O2 + 4 H(+) = 4 Fe(3+) + 2 H2O</text>
        <dbReference type="Rhea" id="RHEA:11148"/>
        <dbReference type="ChEBI" id="CHEBI:15377"/>
        <dbReference type="ChEBI" id="CHEBI:15378"/>
        <dbReference type="ChEBI" id="CHEBI:15379"/>
        <dbReference type="ChEBI" id="CHEBI:29033"/>
        <dbReference type="ChEBI" id="CHEBI:29034"/>
        <dbReference type="EC" id="1.16.3.1"/>
    </reaction>
    <physiologicalReaction direction="left-to-right" evidence="7 8">
        <dbReference type="Rhea" id="RHEA:11149"/>
    </physiologicalReaction>
</comment>
<comment type="subunit">
    <text evidence="5">Homooligomer of 24 subunits. The functional molecule is roughly spherical and contains a central cavity into which the polymeric mineral iron core is deposited.</text>
</comment>
<comment type="subcellular location">
    <subcellularLocation>
        <location evidence="4">Mitochondrion</location>
    </subcellularLocation>
</comment>
<comment type="tissue specificity">
    <text evidence="4">Detected in testis and erythroleukemia. Expression is very low or not detectable in brain, colon, heart, kidney, liver, lung, muscle, placental, spleen and small intestine.</text>
</comment>
<comment type="similarity">
    <text evidence="6">Belongs to the ferritin family.</text>
</comment>
<comment type="online information" name="Wikipedia">
    <link uri="https://en.wikipedia.org/wiki/Ferritin"/>
    <text>Ferritin entry</text>
</comment>
<proteinExistence type="evidence at protein level"/>
<keyword id="KW-0002">3D-structure</keyword>
<keyword id="KW-0408">Iron</keyword>
<keyword id="KW-0409">Iron storage</keyword>
<keyword id="KW-0479">Metal-binding</keyword>
<keyword id="KW-0496">Mitochondrion</keyword>
<keyword id="KW-0560">Oxidoreductase</keyword>
<keyword id="KW-1267">Proteomics identification</keyword>
<keyword id="KW-1185">Reference proteome</keyword>
<keyword id="KW-0809">Transit peptide</keyword>